<proteinExistence type="inferred from homology"/>
<name>GMHA_BURMA</name>
<feature type="chain" id="PRO_0000136520" description="Phosphoheptose isomerase">
    <location>
        <begin position="1"/>
        <end position="197"/>
    </location>
</feature>
<feature type="domain" description="SIS" evidence="1">
    <location>
        <begin position="40"/>
        <end position="197"/>
    </location>
</feature>
<feature type="binding site" evidence="1">
    <location>
        <begin position="55"/>
        <end position="57"/>
    </location>
    <ligand>
        <name>substrate</name>
    </ligand>
</feature>
<feature type="binding site" evidence="1">
    <location>
        <position position="64"/>
    </location>
    <ligand>
        <name>Zn(2+)</name>
        <dbReference type="ChEBI" id="CHEBI:29105"/>
    </ligand>
</feature>
<feature type="binding site" evidence="1">
    <location>
        <position position="68"/>
    </location>
    <ligand>
        <name>substrate</name>
    </ligand>
</feature>
<feature type="binding site" evidence="1">
    <location>
        <position position="68"/>
    </location>
    <ligand>
        <name>Zn(2+)</name>
        <dbReference type="ChEBI" id="CHEBI:29105"/>
    </ligand>
</feature>
<feature type="binding site" evidence="1">
    <location>
        <begin position="97"/>
        <end position="98"/>
    </location>
    <ligand>
        <name>substrate</name>
    </ligand>
</feature>
<feature type="binding site" evidence="1">
    <location>
        <begin position="123"/>
        <end position="125"/>
    </location>
    <ligand>
        <name>substrate</name>
    </ligand>
</feature>
<feature type="binding site" evidence="1">
    <location>
        <position position="128"/>
    </location>
    <ligand>
        <name>substrate</name>
    </ligand>
</feature>
<feature type="binding site" evidence="1">
    <location>
        <position position="175"/>
    </location>
    <ligand>
        <name>substrate</name>
    </ligand>
</feature>
<feature type="binding site" evidence="1">
    <location>
        <position position="175"/>
    </location>
    <ligand>
        <name>Zn(2+)</name>
        <dbReference type="ChEBI" id="CHEBI:29105"/>
    </ligand>
</feature>
<feature type="binding site" evidence="1">
    <location>
        <position position="183"/>
    </location>
    <ligand>
        <name>Zn(2+)</name>
        <dbReference type="ChEBI" id="CHEBI:29105"/>
    </ligand>
</feature>
<feature type="sequence conflict" description="In Ref. 1; AAK26468." evidence="2" ref="1">
    <original>D</original>
    <variation>N</variation>
    <location>
        <position position="26"/>
    </location>
</feature>
<reference key="1">
    <citation type="journal article" date="2001" name="Microb. Pathog.">
        <title>Identification of a Burkholderia mallei polysaccharide gene cluster by subtractive hybridization and demonstration that the encoded capsule is an essential virulence determinant.</title>
        <authorList>
            <person name="DeShazer D."/>
            <person name="Waag D.M."/>
            <person name="Fritz D.L."/>
            <person name="Woods D.E."/>
        </authorList>
    </citation>
    <scope>NUCLEOTIDE SEQUENCE [GENOMIC DNA]</scope>
    <source>
        <strain>ATCC 23344</strain>
    </source>
</reference>
<reference key="2">
    <citation type="journal article" date="2004" name="Proc. Natl. Acad. Sci. U.S.A.">
        <title>Structural flexibility in the Burkholderia mallei genome.</title>
        <authorList>
            <person name="Nierman W.C."/>
            <person name="DeShazer D."/>
            <person name="Kim H.S."/>
            <person name="Tettelin H."/>
            <person name="Nelson K.E."/>
            <person name="Feldblyum T.V."/>
            <person name="Ulrich R.L."/>
            <person name="Ronning C.M."/>
            <person name="Brinkac L.M."/>
            <person name="Daugherty S.C."/>
            <person name="Davidsen T.D."/>
            <person name="DeBoy R.T."/>
            <person name="Dimitrov G."/>
            <person name="Dodson R.J."/>
            <person name="Durkin A.S."/>
            <person name="Gwinn M.L."/>
            <person name="Haft D.H."/>
            <person name="Khouri H.M."/>
            <person name="Kolonay J.F."/>
            <person name="Madupu R."/>
            <person name="Mohammoud Y."/>
            <person name="Nelson W.C."/>
            <person name="Radune D."/>
            <person name="Romero C.M."/>
            <person name="Sarria S."/>
            <person name="Selengut J."/>
            <person name="Shamblin C."/>
            <person name="Sullivan S.A."/>
            <person name="White O."/>
            <person name="Yu Y."/>
            <person name="Zafar N."/>
            <person name="Zhou L."/>
            <person name="Fraser C.M."/>
        </authorList>
    </citation>
    <scope>NUCLEOTIDE SEQUENCE [LARGE SCALE GENOMIC DNA]</scope>
    <source>
        <strain>ATCC 23344</strain>
    </source>
</reference>
<reference key="3">
    <citation type="journal article" date="2002" name="Microbiology">
        <title>Novel pathways for biosynthesis of nucleotide-activated glycero-manno-heptose precursors of bacterial glycoproteins and cell surface polysaccharides.</title>
        <authorList>
            <person name="Valvano M.A."/>
            <person name="Messner P."/>
            <person name="Kosma P."/>
        </authorList>
    </citation>
    <scope>BIOSYNTHESIS OF NUCLEOTIDE-ACTIVATED GLYCERO-MANNO-HEPTOSE</scope>
</reference>
<sequence length="197" mass="20784">MENRELTYITNSIAEAQRVMAAMLADERLLATVQKVADACIASIAQGGKVLLAGNGGSAADAQHIAGEFVSRFAFDRPGLPAVALTTDTSILTAIGNDYGYEKLFSRQVQALGNKGDVLIGYSTSGKSPNILAAFREAKAKGMTCVGFTGNRGGEMRELCDLLLEVPSADTPKIQEGHLVLGHIVCGLVEHSIFGKQ</sequence>
<gene>
    <name evidence="1" type="primary">gmhA</name>
    <name type="ordered locus">BMA2295</name>
</gene>
<evidence type="ECO:0000255" key="1">
    <source>
        <dbReference type="HAMAP-Rule" id="MF_00067"/>
    </source>
</evidence>
<evidence type="ECO:0000305" key="2"/>
<organism>
    <name type="scientific">Burkholderia mallei (strain ATCC 23344)</name>
    <dbReference type="NCBI Taxonomy" id="243160"/>
    <lineage>
        <taxon>Bacteria</taxon>
        <taxon>Pseudomonadati</taxon>
        <taxon>Pseudomonadota</taxon>
        <taxon>Betaproteobacteria</taxon>
        <taxon>Burkholderiales</taxon>
        <taxon>Burkholderiaceae</taxon>
        <taxon>Burkholderia</taxon>
        <taxon>pseudomallei group</taxon>
    </lineage>
</organism>
<comment type="function">
    <text evidence="1">Catalyzes the isomerization of sedoheptulose 7-phosphate in D-glycero-D-manno-heptose 7-phosphate.</text>
</comment>
<comment type="catalytic activity">
    <reaction evidence="1">
        <text>2 D-sedoheptulose 7-phosphate = D-glycero-alpha-D-manno-heptose 7-phosphate + D-glycero-beta-D-manno-heptose 7-phosphate</text>
        <dbReference type="Rhea" id="RHEA:27489"/>
        <dbReference type="ChEBI" id="CHEBI:57483"/>
        <dbReference type="ChEBI" id="CHEBI:60203"/>
        <dbReference type="ChEBI" id="CHEBI:60204"/>
        <dbReference type="EC" id="5.3.1.28"/>
    </reaction>
</comment>
<comment type="cofactor">
    <cofactor evidence="1">
        <name>Zn(2+)</name>
        <dbReference type="ChEBI" id="CHEBI:29105"/>
    </cofactor>
    <text evidence="1">Binds 1 zinc ion per subunit.</text>
</comment>
<comment type="pathway">
    <text evidence="1">Carbohydrate biosynthesis; D-glycero-D-manno-heptose 7-phosphate biosynthesis; D-glycero-alpha-D-manno-heptose 7-phosphate and D-glycero-beta-D-manno-heptose 7-phosphate from sedoheptulose 7-phosphate: step 1/1.</text>
</comment>
<comment type="pathway">
    <text>Capsule biogenesis; capsule polysaccharide biosynthesis.</text>
</comment>
<comment type="subunit">
    <text evidence="1">Homotetramer.</text>
</comment>
<comment type="subcellular location">
    <subcellularLocation>
        <location evidence="1">Cytoplasm</location>
    </subcellularLocation>
</comment>
<comment type="miscellaneous">
    <text evidence="1">The reaction produces a racemic mixture of D-glycero-alpha-D-manno-heptose 7-phosphate and D-glycero-beta-D-manno-heptose 7-phosphate.</text>
</comment>
<comment type="similarity">
    <text evidence="1">Belongs to the SIS family. GmhA subfamily.</text>
</comment>
<dbReference type="EC" id="5.3.1.28" evidence="1"/>
<dbReference type="EMBL" id="AF285636">
    <property type="protein sequence ID" value="AAK26468.1"/>
    <property type="molecule type" value="Genomic_DNA"/>
</dbReference>
<dbReference type="EMBL" id="CP000010">
    <property type="protein sequence ID" value="AAU49838.1"/>
    <property type="molecule type" value="Genomic_DNA"/>
</dbReference>
<dbReference type="RefSeq" id="WP_004194315.1">
    <property type="nucleotide sequence ID" value="NC_006348.1"/>
</dbReference>
<dbReference type="RefSeq" id="YP_103857.1">
    <property type="nucleotide sequence ID" value="NC_006348.1"/>
</dbReference>
<dbReference type="SMR" id="Q9AI36"/>
<dbReference type="GeneID" id="93061384"/>
<dbReference type="KEGG" id="bma:BMA2295"/>
<dbReference type="PATRIC" id="fig|243160.12.peg.2362"/>
<dbReference type="eggNOG" id="COG0279">
    <property type="taxonomic scope" value="Bacteria"/>
</dbReference>
<dbReference type="HOGENOM" id="CLU_080999_0_1_4"/>
<dbReference type="BRENDA" id="5.3.1.28">
    <property type="organism ID" value="1030"/>
</dbReference>
<dbReference type="UniPathway" id="UPA00041">
    <property type="reaction ID" value="UER00436"/>
</dbReference>
<dbReference type="UniPathway" id="UPA00934"/>
<dbReference type="Proteomes" id="UP000006693">
    <property type="component" value="Chromosome 1"/>
</dbReference>
<dbReference type="GO" id="GO:0005737">
    <property type="term" value="C:cytoplasm"/>
    <property type="evidence" value="ECO:0007669"/>
    <property type="project" value="UniProtKB-SubCell"/>
</dbReference>
<dbReference type="GO" id="GO:0097367">
    <property type="term" value="F:carbohydrate derivative binding"/>
    <property type="evidence" value="ECO:0007669"/>
    <property type="project" value="InterPro"/>
</dbReference>
<dbReference type="GO" id="GO:0008968">
    <property type="term" value="F:D-sedoheptulose 7-phosphate isomerase activity"/>
    <property type="evidence" value="ECO:0007669"/>
    <property type="project" value="UniProtKB-UniRule"/>
</dbReference>
<dbReference type="GO" id="GO:0008270">
    <property type="term" value="F:zinc ion binding"/>
    <property type="evidence" value="ECO:0007669"/>
    <property type="project" value="UniProtKB-UniRule"/>
</dbReference>
<dbReference type="GO" id="GO:0045227">
    <property type="term" value="P:capsule polysaccharide biosynthetic process"/>
    <property type="evidence" value="ECO:0007669"/>
    <property type="project" value="UniProtKB-UniPathway"/>
</dbReference>
<dbReference type="GO" id="GO:2001061">
    <property type="term" value="P:D-glycero-D-manno-heptose 7-phosphate biosynthetic process"/>
    <property type="evidence" value="ECO:0007669"/>
    <property type="project" value="UniProtKB-UniPathway"/>
</dbReference>
<dbReference type="CDD" id="cd05006">
    <property type="entry name" value="SIS_GmhA"/>
    <property type="match status" value="1"/>
</dbReference>
<dbReference type="Gene3D" id="3.40.50.10490">
    <property type="entry name" value="Glucose-6-phosphate isomerase like protein, domain 1"/>
    <property type="match status" value="1"/>
</dbReference>
<dbReference type="HAMAP" id="MF_00067">
    <property type="entry name" value="GmhA"/>
    <property type="match status" value="1"/>
</dbReference>
<dbReference type="InterPro" id="IPR035461">
    <property type="entry name" value="GmhA/DiaA"/>
</dbReference>
<dbReference type="InterPro" id="IPR004515">
    <property type="entry name" value="Phosphoheptose_Isoase"/>
</dbReference>
<dbReference type="InterPro" id="IPR001347">
    <property type="entry name" value="SIS_dom"/>
</dbReference>
<dbReference type="InterPro" id="IPR046348">
    <property type="entry name" value="SIS_dom_sf"/>
</dbReference>
<dbReference type="InterPro" id="IPR050099">
    <property type="entry name" value="SIS_GmhA/DiaA_subfam"/>
</dbReference>
<dbReference type="PANTHER" id="PTHR30390:SF6">
    <property type="entry name" value="DNAA INITIATOR-ASSOCIATING PROTEIN DIAA"/>
    <property type="match status" value="1"/>
</dbReference>
<dbReference type="PANTHER" id="PTHR30390">
    <property type="entry name" value="SEDOHEPTULOSE 7-PHOSPHATE ISOMERASE / DNAA INITIATOR-ASSOCIATING FACTOR FOR REPLICATION INITIATION"/>
    <property type="match status" value="1"/>
</dbReference>
<dbReference type="Pfam" id="PF13580">
    <property type="entry name" value="SIS_2"/>
    <property type="match status" value="1"/>
</dbReference>
<dbReference type="SUPFAM" id="SSF53697">
    <property type="entry name" value="SIS domain"/>
    <property type="match status" value="1"/>
</dbReference>
<dbReference type="PROSITE" id="PS51464">
    <property type="entry name" value="SIS"/>
    <property type="match status" value="1"/>
</dbReference>
<accession>Q9AI36</accession>
<accession>Q62HG3</accession>
<keyword id="KW-0972">Capsule biogenesis/degradation</keyword>
<keyword id="KW-0119">Carbohydrate metabolism</keyword>
<keyword id="KW-0963">Cytoplasm</keyword>
<keyword id="KW-0413">Isomerase</keyword>
<keyword id="KW-0479">Metal-binding</keyword>
<keyword id="KW-1185">Reference proteome</keyword>
<keyword id="KW-0862">Zinc</keyword>
<protein>
    <recommendedName>
        <fullName evidence="1">Phosphoheptose isomerase</fullName>
        <ecNumber evidence="1">5.3.1.28</ecNumber>
    </recommendedName>
    <alternativeName>
        <fullName evidence="1">Sedoheptulose 7-phosphate isomerase</fullName>
    </alternativeName>
</protein>